<organism>
    <name type="scientific">Cereibacter sphaeroides (strain ATCC 17025 / ATH 2.4.3)</name>
    <name type="common">Rhodobacter sphaeroides</name>
    <dbReference type="NCBI Taxonomy" id="349102"/>
    <lineage>
        <taxon>Bacteria</taxon>
        <taxon>Pseudomonadati</taxon>
        <taxon>Pseudomonadota</taxon>
        <taxon>Alphaproteobacteria</taxon>
        <taxon>Rhodobacterales</taxon>
        <taxon>Paracoccaceae</taxon>
        <taxon>Cereibacter</taxon>
    </lineage>
</organism>
<comment type="function">
    <text evidence="1">Catalyzes the interconversion of 2-phosphoglycerate and 3-phosphoglycerate.</text>
</comment>
<comment type="catalytic activity">
    <reaction evidence="1">
        <text>(2R)-2-phosphoglycerate = (2R)-3-phosphoglycerate</text>
        <dbReference type="Rhea" id="RHEA:15901"/>
        <dbReference type="ChEBI" id="CHEBI:58272"/>
        <dbReference type="ChEBI" id="CHEBI:58289"/>
        <dbReference type="EC" id="5.4.2.12"/>
    </reaction>
</comment>
<comment type="cofactor">
    <cofactor evidence="1">
        <name>Mn(2+)</name>
        <dbReference type="ChEBI" id="CHEBI:29035"/>
    </cofactor>
    <text evidence="1">Binds 2 manganese ions per subunit.</text>
</comment>
<comment type="pathway">
    <text evidence="1">Carbohydrate degradation; glycolysis; pyruvate from D-glyceraldehyde 3-phosphate: step 3/5.</text>
</comment>
<comment type="subunit">
    <text evidence="1">Monomer.</text>
</comment>
<comment type="similarity">
    <text evidence="1">Belongs to the BPG-independent phosphoglycerate mutase family.</text>
</comment>
<gene>
    <name evidence="1" type="primary">gpmI</name>
    <name type="ordered locus">Rsph17025_2981</name>
</gene>
<protein>
    <recommendedName>
        <fullName evidence="1">2,3-bisphosphoglycerate-independent phosphoglycerate mutase</fullName>
        <shortName evidence="1">BPG-independent PGAM</shortName>
        <shortName evidence="1">Phosphoglyceromutase</shortName>
        <shortName evidence="1">iPGM</shortName>
        <ecNumber evidence="1">5.4.2.12</ecNumber>
    </recommendedName>
</protein>
<evidence type="ECO:0000255" key="1">
    <source>
        <dbReference type="HAMAP-Rule" id="MF_01038"/>
    </source>
</evidence>
<feature type="chain" id="PRO_1000063996" description="2,3-bisphosphoglycerate-independent phosphoglycerate mutase">
    <location>
        <begin position="1"/>
        <end position="506"/>
    </location>
</feature>
<feature type="active site" description="Phosphoserine intermediate" evidence="1">
    <location>
        <position position="63"/>
    </location>
</feature>
<feature type="binding site" evidence="1">
    <location>
        <position position="13"/>
    </location>
    <ligand>
        <name>Mn(2+)</name>
        <dbReference type="ChEBI" id="CHEBI:29035"/>
        <label>2</label>
    </ligand>
</feature>
<feature type="binding site" evidence="1">
    <location>
        <position position="63"/>
    </location>
    <ligand>
        <name>Mn(2+)</name>
        <dbReference type="ChEBI" id="CHEBI:29035"/>
        <label>2</label>
    </ligand>
</feature>
<feature type="binding site" evidence="1">
    <location>
        <position position="124"/>
    </location>
    <ligand>
        <name>substrate</name>
    </ligand>
</feature>
<feature type="binding site" evidence="1">
    <location>
        <begin position="153"/>
        <end position="154"/>
    </location>
    <ligand>
        <name>substrate</name>
    </ligand>
</feature>
<feature type="binding site" evidence="1">
    <location>
        <position position="183"/>
    </location>
    <ligand>
        <name>substrate</name>
    </ligand>
</feature>
<feature type="binding site" evidence="1">
    <location>
        <position position="189"/>
    </location>
    <ligand>
        <name>substrate</name>
    </ligand>
</feature>
<feature type="binding site" evidence="1">
    <location>
        <begin position="254"/>
        <end position="257"/>
    </location>
    <ligand>
        <name>substrate</name>
    </ligand>
</feature>
<feature type="binding site" evidence="1">
    <location>
        <position position="330"/>
    </location>
    <ligand>
        <name>substrate</name>
    </ligand>
</feature>
<feature type="binding site" evidence="1">
    <location>
        <position position="396"/>
    </location>
    <ligand>
        <name>Mn(2+)</name>
        <dbReference type="ChEBI" id="CHEBI:29035"/>
        <label>1</label>
    </ligand>
</feature>
<feature type="binding site" evidence="1">
    <location>
        <position position="400"/>
    </location>
    <ligand>
        <name>Mn(2+)</name>
        <dbReference type="ChEBI" id="CHEBI:29035"/>
        <label>1</label>
    </ligand>
</feature>
<feature type="binding site" evidence="1">
    <location>
        <position position="437"/>
    </location>
    <ligand>
        <name>Mn(2+)</name>
        <dbReference type="ChEBI" id="CHEBI:29035"/>
        <label>2</label>
    </ligand>
</feature>
<feature type="binding site" evidence="1">
    <location>
        <position position="438"/>
    </location>
    <ligand>
        <name>Mn(2+)</name>
        <dbReference type="ChEBI" id="CHEBI:29035"/>
        <label>2</label>
    </ligand>
</feature>
<feature type="binding site" evidence="1">
    <location>
        <position position="456"/>
    </location>
    <ligand>
        <name>Mn(2+)</name>
        <dbReference type="ChEBI" id="CHEBI:29035"/>
        <label>1</label>
    </ligand>
</feature>
<accession>A4WWV3</accession>
<sequence>MTAPKPVVLCILDGWGLRAEREANAVALANTPTFDRLMATCPNATLITHGPDVGLPRGQMGNSEVGHTNIGAGRVVAMDLGAIDLAIEEGTFARNPALCDFIAKVKAKGGTAHLMGVVSDGGVHGHIQHLIAAVEVIAASGVPVVIHAITDGRDVAPTSAGGFVQQLAEALPAGASIGTVIGRYWAMDRDKRWDRVKRASDAMLHGQGERAADAVAAVAAALARGETDEFIAPTVIGSYTGAMDGDGFFCLNFRADRAREILAGLAQPGFDAYDTGRRPDWSGFLGMVDYSTEHDRFMTTAYPKQVIRNTLGEWVASHGLRQFRIAETEKYPHVTFFLNGGKEVPEAGEDRYMANSPKVATYDLKPEMSAPDVSDHLVQAIGEGYDLIVVNYANPDMVGHTGDLRAAMAACEEVDRGLGRAVEAVRQAGGAMIVTADHGNCETMIDPETGGPHTAHTTNPVPVILVGGPAGARLRAGRLADLAPTLLELMGLPQPEEMTGRSLIEA</sequence>
<keyword id="KW-0324">Glycolysis</keyword>
<keyword id="KW-0413">Isomerase</keyword>
<keyword id="KW-0464">Manganese</keyword>
<keyword id="KW-0479">Metal-binding</keyword>
<reference key="1">
    <citation type="submission" date="2007-04" db="EMBL/GenBank/DDBJ databases">
        <title>Complete sequence of chromosome of Rhodobacter sphaeroides ATCC 17025.</title>
        <authorList>
            <consortium name="US DOE Joint Genome Institute"/>
            <person name="Copeland A."/>
            <person name="Lucas S."/>
            <person name="Lapidus A."/>
            <person name="Barry K."/>
            <person name="Detter J.C."/>
            <person name="Glavina del Rio T."/>
            <person name="Hammon N."/>
            <person name="Israni S."/>
            <person name="Dalin E."/>
            <person name="Tice H."/>
            <person name="Pitluck S."/>
            <person name="Chertkov O."/>
            <person name="Brettin T."/>
            <person name="Bruce D."/>
            <person name="Han C."/>
            <person name="Schmutz J."/>
            <person name="Larimer F."/>
            <person name="Land M."/>
            <person name="Hauser L."/>
            <person name="Kyrpides N."/>
            <person name="Kim E."/>
            <person name="Richardson P."/>
            <person name="Mackenzie C."/>
            <person name="Choudhary M."/>
            <person name="Donohue T.J."/>
            <person name="Kaplan S."/>
        </authorList>
    </citation>
    <scope>NUCLEOTIDE SEQUENCE [LARGE SCALE GENOMIC DNA]</scope>
    <source>
        <strain>ATCC 17025 / ATH 2.4.3</strain>
    </source>
</reference>
<name>GPMI_CERS5</name>
<proteinExistence type="inferred from homology"/>
<dbReference type="EC" id="5.4.2.12" evidence="1"/>
<dbReference type="EMBL" id="CP000661">
    <property type="protein sequence ID" value="ABP71867.1"/>
    <property type="molecule type" value="Genomic_DNA"/>
</dbReference>
<dbReference type="SMR" id="A4WWV3"/>
<dbReference type="STRING" id="349102.Rsph17025_2981"/>
<dbReference type="KEGG" id="rsq:Rsph17025_2981"/>
<dbReference type="eggNOG" id="COG0696">
    <property type="taxonomic scope" value="Bacteria"/>
</dbReference>
<dbReference type="HOGENOM" id="CLU_026099_2_0_5"/>
<dbReference type="BioCyc" id="RSPH349102:G1G8M-3082-MONOMER"/>
<dbReference type="UniPathway" id="UPA00109">
    <property type="reaction ID" value="UER00186"/>
</dbReference>
<dbReference type="GO" id="GO:0005829">
    <property type="term" value="C:cytosol"/>
    <property type="evidence" value="ECO:0007669"/>
    <property type="project" value="TreeGrafter"/>
</dbReference>
<dbReference type="GO" id="GO:0030145">
    <property type="term" value="F:manganese ion binding"/>
    <property type="evidence" value="ECO:0007669"/>
    <property type="project" value="UniProtKB-UniRule"/>
</dbReference>
<dbReference type="GO" id="GO:0004619">
    <property type="term" value="F:phosphoglycerate mutase activity"/>
    <property type="evidence" value="ECO:0007669"/>
    <property type="project" value="UniProtKB-EC"/>
</dbReference>
<dbReference type="GO" id="GO:0006007">
    <property type="term" value="P:glucose catabolic process"/>
    <property type="evidence" value="ECO:0007669"/>
    <property type="project" value="InterPro"/>
</dbReference>
<dbReference type="GO" id="GO:0006096">
    <property type="term" value="P:glycolytic process"/>
    <property type="evidence" value="ECO:0007669"/>
    <property type="project" value="UniProtKB-UniRule"/>
</dbReference>
<dbReference type="CDD" id="cd16010">
    <property type="entry name" value="iPGM"/>
    <property type="match status" value="1"/>
</dbReference>
<dbReference type="FunFam" id="3.40.1450.10:FF:000002">
    <property type="entry name" value="2,3-bisphosphoglycerate-independent phosphoglycerate mutase"/>
    <property type="match status" value="1"/>
</dbReference>
<dbReference type="Gene3D" id="3.40.720.10">
    <property type="entry name" value="Alkaline Phosphatase, subunit A"/>
    <property type="match status" value="1"/>
</dbReference>
<dbReference type="Gene3D" id="3.40.1450.10">
    <property type="entry name" value="BPG-independent phosphoglycerate mutase, domain B"/>
    <property type="match status" value="1"/>
</dbReference>
<dbReference type="HAMAP" id="MF_01038">
    <property type="entry name" value="GpmI"/>
    <property type="match status" value="1"/>
</dbReference>
<dbReference type="InterPro" id="IPR017850">
    <property type="entry name" value="Alkaline_phosphatase_core_sf"/>
</dbReference>
<dbReference type="InterPro" id="IPR011258">
    <property type="entry name" value="BPG-indep_PGM_N"/>
</dbReference>
<dbReference type="InterPro" id="IPR006124">
    <property type="entry name" value="Metalloenzyme"/>
</dbReference>
<dbReference type="InterPro" id="IPR036646">
    <property type="entry name" value="PGAM_B_sf"/>
</dbReference>
<dbReference type="InterPro" id="IPR005995">
    <property type="entry name" value="Pgm_bpd_ind"/>
</dbReference>
<dbReference type="NCBIfam" id="TIGR01307">
    <property type="entry name" value="pgm_bpd_ind"/>
    <property type="match status" value="1"/>
</dbReference>
<dbReference type="PANTHER" id="PTHR31637">
    <property type="entry name" value="2,3-BISPHOSPHOGLYCERATE-INDEPENDENT PHOSPHOGLYCERATE MUTASE"/>
    <property type="match status" value="1"/>
</dbReference>
<dbReference type="PANTHER" id="PTHR31637:SF0">
    <property type="entry name" value="2,3-BISPHOSPHOGLYCERATE-INDEPENDENT PHOSPHOGLYCERATE MUTASE"/>
    <property type="match status" value="1"/>
</dbReference>
<dbReference type="Pfam" id="PF06415">
    <property type="entry name" value="iPGM_N"/>
    <property type="match status" value="1"/>
</dbReference>
<dbReference type="Pfam" id="PF01676">
    <property type="entry name" value="Metalloenzyme"/>
    <property type="match status" value="1"/>
</dbReference>
<dbReference type="PIRSF" id="PIRSF001492">
    <property type="entry name" value="IPGAM"/>
    <property type="match status" value="1"/>
</dbReference>
<dbReference type="SUPFAM" id="SSF64158">
    <property type="entry name" value="2,3-Bisphosphoglycerate-independent phosphoglycerate mutase, substrate-binding domain"/>
    <property type="match status" value="1"/>
</dbReference>
<dbReference type="SUPFAM" id="SSF53649">
    <property type="entry name" value="Alkaline phosphatase-like"/>
    <property type="match status" value="1"/>
</dbReference>